<keyword id="KW-1064">Adaptive immunity</keyword>
<keyword id="KW-1003">Cell membrane</keyword>
<keyword id="KW-0391">Immunity</keyword>
<keyword id="KW-0472">Membrane</keyword>
<keyword id="KW-0675">Receptor</keyword>
<keyword id="KW-1185">Reference proteome</keyword>
<keyword id="KW-1279">T cell receptor</keyword>
<sequence length="15" mass="1640">NTEAFFGQGTRLTVV</sequence>
<gene>
    <name evidence="6" type="primary">TRBJ1-1</name>
</gene>
<accession>A0A0J9YXA8</accession>
<organism>
    <name type="scientific">Homo sapiens</name>
    <name type="common">Human</name>
    <dbReference type="NCBI Taxonomy" id="9606"/>
    <lineage>
        <taxon>Eukaryota</taxon>
        <taxon>Metazoa</taxon>
        <taxon>Chordata</taxon>
        <taxon>Craniata</taxon>
        <taxon>Vertebrata</taxon>
        <taxon>Euteleostomi</taxon>
        <taxon>Mammalia</taxon>
        <taxon>Eutheria</taxon>
        <taxon>Euarchontoglires</taxon>
        <taxon>Primates</taxon>
        <taxon>Haplorrhini</taxon>
        <taxon>Catarrhini</taxon>
        <taxon>Hominidae</taxon>
        <taxon>Homo</taxon>
    </lineage>
</organism>
<protein>
    <recommendedName>
        <fullName evidence="6">T cell receptor beta joining 1-1</fullName>
    </recommendedName>
</protein>
<evidence type="ECO:0000303" key="1">
    <source>
    </source>
</evidence>
<evidence type="ECO:0000303" key="2">
    <source>
    </source>
</evidence>
<evidence type="ECO:0000303" key="3">
    <source>
    </source>
</evidence>
<evidence type="ECO:0000303" key="4">
    <source>
    </source>
</evidence>
<evidence type="ECO:0000303" key="5">
    <source>
    </source>
</evidence>
<evidence type="ECO:0000303" key="6">
    <source ref="2"/>
</evidence>
<name>TJB11_HUMAN</name>
<feature type="chain" id="PRO_0000444714" description="T cell receptor beta joining 1-1">
    <location>
        <begin position="1" status="less than"/>
        <end position="15" status="greater than"/>
    </location>
</feature>
<feature type="non-terminal residue">
    <location>
        <position position="1"/>
    </location>
</feature>
<feature type="non-terminal residue">
    <location>
        <position position="15"/>
    </location>
</feature>
<dbReference type="EMBL" id="AC245427">
    <property type="status" value="NOT_ANNOTATED_CDS"/>
    <property type="molecule type" value="Genomic_DNA"/>
</dbReference>
<dbReference type="IMGT_GENE-DB" id="TRBJ1-1"/>
<dbReference type="BioMuta" id="ENSG00000282078"/>
<dbReference type="Ensembl" id="ENST00000632951.1">
    <property type="protein sequence ID" value="ENSP00000488686.1"/>
    <property type="gene ID" value="ENSG00000282320.1"/>
</dbReference>
<dbReference type="AGR" id="HGNC:12162"/>
<dbReference type="GeneCards" id="TRBJ1-1"/>
<dbReference type="HGNC" id="HGNC:12162">
    <property type="gene designation" value="TRBJ1-1"/>
</dbReference>
<dbReference type="HPA" id="ENSG00000282320">
    <property type="expression patterns" value="Tissue enriched (lymphoid)"/>
</dbReference>
<dbReference type="neXtProt" id="NX_A0A0J9YXA8"/>
<dbReference type="VEuPathDB" id="HostDB:ENSG00000282320"/>
<dbReference type="InParanoid" id="A0A0J9YXA8"/>
<dbReference type="PAN-GO" id="A0A0J9YXA8">
    <property type="GO annotations" value="0 GO annotations based on evolutionary models"/>
</dbReference>
<dbReference type="ChiTaRS" id="TRBJ1-1">
    <property type="organism name" value="human"/>
</dbReference>
<dbReference type="Pharos" id="A0A0J9YXA8">
    <property type="development level" value="Tdark"/>
</dbReference>
<dbReference type="PRO" id="PR:A0A0J9YXA8"/>
<dbReference type="Proteomes" id="UP000005640">
    <property type="component" value="Chromosome 7"/>
</dbReference>
<dbReference type="Bgee" id="ENSG00000282320">
    <property type="expression patterns" value="Expressed in granulocyte and 83 other cell types or tissues"/>
</dbReference>
<dbReference type="GO" id="GO:0042101">
    <property type="term" value="C:T cell receptor complex"/>
    <property type="evidence" value="ECO:0007669"/>
    <property type="project" value="UniProtKB-KW"/>
</dbReference>
<dbReference type="GO" id="GO:0002250">
    <property type="term" value="P:adaptive immune response"/>
    <property type="evidence" value="ECO:0007669"/>
    <property type="project" value="UniProtKB-KW"/>
</dbReference>
<reference key="1">
    <citation type="journal article" date="2003" name="Nature">
        <title>The DNA sequence of human chromosome 7.</title>
        <authorList>
            <person name="Hillier L.W."/>
            <person name="Fulton R.S."/>
            <person name="Fulton L.A."/>
            <person name="Graves T.A."/>
            <person name="Pepin K.H."/>
            <person name="Wagner-McPherson C."/>
            <person name="Layman D."/>
            <person name="Maas J."/>
            <person name="Jaeger S."/>
            <person name="Walker R."/>
            <person name="Wylie K."/>
            <person name="Sekhon M."/>
            <person name="Becker M.C."/>
            <person name="O'Laughlin M.D."/>
            <person name="Schaller M.E."/>
            <person name="Fewell G.A."/>
            <person name="Delehaunty K.D."/>
            <person name="Miner T.L."/>
            <person name="Nash W.E."/>
            <person name="Cordes M."/>
            <person name="Du H."/>
            <person name="Sun H."/>
            <person name="Edwards J."/>
            <person name="Bradshaw-Cordum H."/>
            <person name="Ali J."/>
            <person name="Andrews S."/>
            <person name="Isak A."/>
            <person name="Vanbrunt A."/>
            <person name="Nguyen C."/>
            <person name="Du F."/>
            <person name="Lamar B."/>
            <person name="Courtney L."/>
            <person name="Kalicki J."/>
            <person name="Ozersky P."/>
            <person name="Bielicki L."/>
            <person name="Scott K."/>
            <person name="Holmes A."/>
            <person name="Harkins R."/>
            <person name="Harris A."/>
            <person name="Strong C.M."/>
            <person name="Hou S."/>
            <person name="Tomlinson C."/>
            <person name="Dauphin-Kohlberg S."/>
            <person name="Kozlowicz-Reilly A."/>
            <person name="Leonard S."/>
            <person name="Rohlfing T."/>
            <person name="Rock S.M."/>
            <person name="Tin-Wollam A.-M."/>
            <person name="Abbott A."/>
            <person name="Minx P."/>
            <person name="Maupin R."/>
            <person name="Strowmatt C."/>
            <person name="Latreille P."/>
            <person name="Miller N."/>
            <person name="Johnson D."/>
            <person name="Murray J."/>
            <person name="Woessner J.P."/>
            <person name="Wendl M.C."/>
            <person name="Yang S.-P."/>
            <person name="Schultz B.R."/>
            <person name="Wallis J.W."/>
            <person name="Spieth J."/>
            <person name="Bieri T.A."/>
            <person name="Nelson J.O."/>
            <person name="Berkowicz N."/>
            <person name="Wohldmann P.E."/>
            <person name="Cook L.L."/>
            <person name="Hickenbotham M.T."/>
            <person name="Eldred J."/>
            <person name="Williams D."/>
            <person name="Bedell J.A."/>
            <person name="Mardis E.R."/>
            <person name="Clifton S.W."/>
            <person name="Chissoe S.L."/>
            <person name="Marra M.A."/>
            <person name="Raymond C."/>
            <person name="Haugen E."/>
            <person name="Gillett W."/>
            <person name="Zhou Y."/>
            <person name="James R."/>
            <person name="Phelps K."/>
            <person name="Iadanoto S."/>
            <person name="Bubb K."/>
            <person name="Simms E."/>
            <person name="Levy R."/>
            <person name="Clendenning J."/>
            <person name="Kaul R."/>
            <person name="Kent W.J."/>
            <person name="Furey T.S."/>
            <person name="Baertsch R.A."/>
            <person name="Brent M.R."/>
            <person name="Keibler E."/>
            <person name="Flicek P."/>
            <person name="Bork P."/>
            <person name="Suyama M."/>
            <person name="Bailey J.A."/>
            <person name="Portnoy M.E."/>
            <person name="Torrents D."/>
            <person name="Chinwalla A.T."/>
            <person name="Gish W.R."/>
            <person name="Eddy S.R."/>
            <person name="McPherson J.D."/>
            <person name="Olson M.V."/>
            <person name="Eichler E.E."/>
            <person name="Green E.D."/>
            <person name="Waterston R.H."/>
            <person name="Wilson R.K."/>
        </authorList>
    </citation>
    <scope>NUCLEOTIDE SEQUENCE [LARGE SCALE GENOMIC DNA] (IMGT ALLELE TRBJ1-1*01)</scope>
</reference>
<reference key="2">
    <citation type="book" date="2001" name="The T Cell Receptor FactsBook.">
        <title>The T Cell Receptor FactsBook.</title>
        <editorList>
            <person name="Lefranc M.P."/>
            <person name="Lefranc G."/>
        </editorList>
        <authorList>
            <person name="Lefranc M.P."/>
            <person name="Lefranc G."/>
        </authorList>
    </citation>
    <scope>NOMENCLATURE</scope>
</reference>
<reference key="3">
    <citation type="journal article" date="2004" name="Nat. Rev. Immunol.">
        <title>The many important facets of T-cell repertoire diversity.</title>
        <authorList>
            <person name="Nikolich-Zugich J."/>
            <person name="Slifka M.K."/>
            <person name="Messaoudi I."/>
        </authorList>
    </citation>
    <scope>REVIEW ON T CELL REPERTOIRE DIVERSITY</scope>
</reference>
<reference key="4">
    <citation type="journal article" date="2010" name="Cold Spring Harb. Perspect. Biol.">
        <title>Structural biology of the T-cell receptor: insights into receptor assembly, ligand recognition, and initiation of signaling.</title>
        <authorList>
            <person name="Wucherpfennig K.W."/>
            <person name="Gagnon E."/>
            <person name="Call M.J."/>
            <person name="Huseby E.S."/>
            <person name="Call M.E."/>
        </authorList>
    </citation>
    <scope>REVIEW ON T CELL RECEPTOR-CD3 COMPLEX ASSEMBLY</scope>
    <scope>SUBCELLULAR LOCATION</scope>
</reference>
<reference key="5">
    <citation type="journal article" date="2013" name="Nat. Rev. Immunol.">
        <title>T cell receptor signalling networks: branched, diversified and bounded.</title>
        <authorList>
            <person name="Brownlie R.J."/>
            <person name="Zamoyska R."/>
        </authorList>
    </citation>
    <scope>REVIEW ON T CELL RECEPTOR SIGNALING</scope>
</reference>
<reference key="6">
    <citation type="journal article" date="2014" name="Front. Immunol.">
        <title>Immunoglobulin and T Cell Receptor Genes: IMGT((R)) and the Birth and Rise of Immunoinformatics.</title>
        <authorList>
            <person name="Lefranc M.P."/>
        </authorList>
    </citation>
    <scope>NOMENCLATURE</scope>
</reference>
<reference key="7">
    <citation type="journal article" date="2015" name="Annu. Rev. Immunol.">
        <title>T cell antigen receptor recognition of antigen-presenting molecules.</title>
        <authorList>
            <person name="Rossjohn J."/>
            <person name="Gras S."/>
            <person name="Miles J.J."/>
            <person name="Turner S.J."/>
            <person name="Godfrey D.I."/>
            <person name="McCluskey J."/>
        </authorList>
    </citation>
    <scope>REVIEW ON FUNCTION</scope>
</reference>
<proteinExistence type="predicted"/>
<comment type="function">
    <text evidence="1 3 4 5">J region of the variable domain of T cell receptor (TR) beta chain that participates in the antigen recognition (PubMed:24600447). Alpha-beta T cell receptors are antigen specific receptors which are essential to the immune response and are present on the cell surface of T lymphocytes. Recognize peptide-major histocompatibility (MH) (pMH) complexes that are displayed by antigen presenting cells (APC), a prerequisite for efficient T cell adaptive immunity against pathogens (PubMed:25493333). Binding of alpha-beta TR to pMH complex initiates TR-CD3 clustering on the cell surface and intracellular activation of LCK that phosphorylates the ITAM motifs of CD3G, CD3D, CD3E and CD247 enabling the recruitment of ZAP70. In turn ZAP70 phosphorylates LAT, which recruits numerous signaling molecules to form the LAT signalosome. The LAT signalosome propagates signal branching to three major signaling pathways, the calcium, the mitogen-activated protein kinase (MAPK) kinase and the nuclear factor NF-kappa-B (NF-kB) pathways, leading to the mobilization of transcription factors that are critical for gene expression and essential for T cell growth and differentiation (PubMed:23524462). The T cell repertoire is generated in the thymus, by V-(D)-J rearrangement. This repertoire is then shaped by intrathymic selection events to generate a peripheral T cell pool of self-MH restricted, non-autoaggressive T cells. Post-thymic interaction of alpha-beta TR with the pMH complexes shapes TR structural and functional avidity (PubMed:15040585).</text>
</comment>
<comment type="subunit">
    <text evidence="2">Alpha-beta TR is a heterodimer composed of an alpha and beta chain; disulfide-linked. The alpha-beta TR is associated with the transmembrane signaling CD3 coreceptor proteins to form the TR-CD3 (TcR or TCR). The assembly of alpha-beta TR heterodimers with CD3 occurs in the endoplasmic reticulum where a single alpha-beta TR heterodimer associates with one CD3D-CD3E heterodimer, one CD3G-CD3E heterodimer and one CD247 homodimer forming a stable octameric structure. CD3D-CD3E and CD3G-CD3E heterodimers preferentially associate with TR alpha and TR beta chains, respectively. The association of the CD247 homodimer is the last step of TcR assembly in the endoplasmic reticulum and is required for transport to the cell surface.</text>
</comment>
<comment type="subcellular location">
    <subcellularLocation>
        <location evidence="2">Cell membrane</location>
    </subcellularLocation>
</comment>